<protein>
    <recommendedName>
        <fullName>Exopolysaccharide phosphotransferase CpsY</fullName>
        <ecNumber>2.7.-.-</ecNumber>
    </recommendedName>
    <alternativeName>
        <fullName>Stealth protein CpsY</fullName>
    </alternativeName>
</protein>
<comment type="miscellaneous">
    <text>Stealth proteins are part of a protein family that is conserved from bacteria to higher eukaryotes. Family members were first identified in microbes as proteins that help pathogens to elude the host innate immune system. Microbial stealth proteins are involved in the biosynthesis of exopolysaccharides. Stealth proteins are predicted to function as hexose-1-phosphoryltransferases.</text>
</comment>
<comment type="similarity">
    <text evidence="1">Belongs to the stealth family.</text>
</comment>
<name>CPSY_MYCBO</name>
<proteinExistence type="inferred from homology"/>
<sequence length="532" mass="60268">MPKISSRDGGRPAQRTVNPIIVTRRGKIARLESGLTPQEAQIEDLVFLRKVLNRADIPYLLIRNHKNRPVLAINIELRAGLERALAAACATEPMYAKTIDEPGLSPVLVATDGLSQLVDPRVVRLYRRRIAPGGFRYGPAFGVELQFWVYEETVIRCPVENSLSRKVLPRNEITPTNVKLYGYKWPTLDGMFAPHASDVVFDIDMVFSWVDGSDPEFRARRMAQMSQYVVGEGDDAEARIRQIDELKYALRSVNMFAPWIRRIFIATDSTPPPWLAEHPKITIVRAEDHFSDRSALPTYNSHAVESQLHHIPGLSEHFLYSNDDMFFGRPLKASMFFSPGGVTRFIEAKTRIGLGANNPARSGFENAARVNRQLLFDRFGQVITRHLEHTAVPLRKSVLIEMEREFPEEFARTAASPFRSDTDISVTNSFYHYYALMTGRAVPQEKAKVLYVDTTSYAGLRLLPKLRKHRGYDFFCLNDGSFPEVPAAQRAERVVSFLERYFPIPAPWEKIAADVSRRDFAVPRTSAPSEGA</sequence>
<dbReference type="EC" id="2.7.-.-"/>
<dbReference type="EMBL" id="LT708304">
    <property type="protein sequence ID" value="SIT99428.1"/>
    <property type="molecule type" value="Genomic_DNA"/>
</dbReference>
<dbReference type="RefSeq" id="NP_854487.1">
    <property type="nucleotide sequence ID" value="NC_002945.3"/>
</dbReference>
<dbReference type="RefSeq" id="WP_003898594.1">
    <property type="nucleotide sequence ID" value="NC_002945.4"/>
</dbReference>
<dbReference type="SMR" id="Q7U184"/>
<dbReference type="KEGG" id="mbo:BQ2027_MB0829C"/>
<dbReference type="PATRIC" id="fig|233413.5.peg.901"/>
<dbReference type="Proteomes" id="UP000001419">
    <property type="component" value="Chromosome"/>
</dbReference>
<dbReference type="GO" id="GO:0016772">
    <property type="term" value="F:transferase activity, transferring phosphorus-containing groups"/>
    <property type="evidence" value="ECO:0007669"/>
    <property type="project" value="InterPro"/>
</dbReference>
<dbReference type="GO" id="GO:0000271">
    <property type="term" value="P:polysaccharide biosynthetic process"/>
    <property type="evidence" value="ECO:0007669"/>
    <property type="project" value="UniProtKB-KW"/>
</dbReference>
<dbReference type="InterPro" id="IPR047141">
    <property type="entry name" value="Stealth"/>
</dbReference>
<dbReference type="InterPro" id="IPR031358">
    <property type="entry name" value="Stealth_CR1"/>
</dbReference>
<dbReference type="InterPro" id="IPR021520">
    <property type="entry name" value="Stealth_CR2"/>
</dbReference>
<dbReference type="InterPro" id="IPR031357">
    <property type="entry name" value="Stealth_CR3"/>
</dbReference>
<dbReference type="InterPro" id="IPR031356">
    <property type="entry name" value="Stealth_CR4"/>
</dbReference>
<dbReference type="PANTHER" id="PTHR24045">
    <property type="match status" value="1"/>
</dbReference>
<dbReference type="PANTHER" id="PTHR24045:SF0">
    <property type="entry name" value="N-ACETYLGLUCOSAMINE-1-PHOSPHOTRANSFERASE SUBUNITS ALPHA_BETA"/>
    <property type="match status" value="1"/>
</dbReference>
<dbReference type="Pfam" id="PF17101">
    <property type="entry name" value="Stealth_CR1"/>
    <property type="match status" value="1"/>
</dbReference>
<dbReference type="Pfam" id="PF11380">
    <property type="entry name" value="Stealth_CR2"/>
    <property type="match status" value="1"/>
</dbReference>
<dbReference type="Pfam" id="PF17102">
    <property type="entry name" value="Stealth_CR3"/>
    <property type="match status" value="1"/>
</dbReference>
<dbReference type="Pfam" id="PF17103">
    <property type="entry name" value="Stealth_CR4"/>
    <property type="match status" value="1"/>
</dbReference>
<keyword id="KW-0270">Exopolysaccharide synthesis</keyword>
<keyword id="KW-1185">Reference proteome</keyword>
<keyword id="KW-0808">Transferase</keyword>
<evidence type="ECO:0000305" key="1"/>
<gene>
    <name type="primary">cpsY</name>
    <name type="ordered locus">BQ2027_MB0829C</name>
</gene>
<organism>
    <name type="scientific">Mycobacterium bovis (strain ATCC BAA-935 / AF2122/97)</name>
    <dbReference type="NCBI Taxonomy" id="233413"/>
    <lineage>
        <taxon>Bacteria</taxon>
        <taxon>Bacillati</taxon>
        <taxon>Actinomycetota</taxon>
        <taxon>Actinomycetes</taxon>
        <taxon>Mycobacteriales</taxon>
        <taxon>Mycobacteriaceae</taxon>
        <taxon>Mycobacterium</taxon>
        <taxon>Mycobacterium tuberculosis complex</taxon>
    </lineage>
</organism>
<accession>Q7U184</accession>
<accession>A0A1R3XWH0</accession>
<accession>X2BG73</accession>
<reference key="1">
    <citation type="journal article" date="2003" name="Proc. Natl. Acad. Sci. U.S.A.">
        <title>The complete genome sequence of Mycobacterium bovis.</title>
        <authorList>
            <person name="Garnier T."/>
            <person name="Eiglmeier K."/>
            <person name="Camus J.-C."/>
            <person name="Medina N."/>
            <person name="Mansoor H."/>
            <person name="Pryor M."/>
            <person name="Duthoy S."/>
            <person name="Grondin S."/>
            <person name="Lacroix C."/>
            <person name="Monsempe C."/>
            <person name="Simon S."/>
            <person name="Harris B."/>
            <person name="Atkin R."/>
            <person name="Doggett J."/>
            <person name="Mayes R."/>
            <person name="Keating L."/>
            <person name="Wheeler P.R."/>
            <person name="Parkhill J."/>
            <person name="Barrell B.G."/>
            <person name="Cole S.T."/>
            <person name="Gordon S.V."/>
            <person name="Hewinson R.G."/>
        </authorList>
    </citation>
    <scope>NUCLEOTIDE SEQUENCE [LARGE SCALE GENOMIC DNA]</scope>
    <source>
        <strain>ATCC BAA-935 / AF2122/97</strain>
    </source>
</reference>
<reference key="2">
    <citation type="journal article" date="2017" name="Genome Announc.">
        <title>Updated reference genome sequence and annotation of Mycobacterium bovis AF2122/97.</title>
        <authorList>
            <person name="Malone K.M."/>
            <person name="Farrell D."/>
            <person name="Stuber T.P."/>
            <person name="Schubert O.T."/>
            <person name="Aebersold R."/>
            <person name="Robbe-Austerman S."/>
            <person name="Gordon S.V."/>
        </authorList>
    </citation>
    <scope>NUCLEOTIDE SEQUENCE [LARGE SCALE GENOMIC DNA]</scope>
    <scope>GENOME REANNOTATION</scope>
    <source>
        <strain>ATCC BAA-935 / AF2122/97</strain>
    </source>
</reference>
<reference key="3">
    <citation type="journal article" date="2005" name="PLoS Comput. Biol.">
        <title>Stealth proteins: in silico identification of a novel protein family rendering bacterial pathogens invisible to host immune defense.</title>
        <authorList>
            <person name="Sperisen P."/>
            <person name="Schmid C.D."/>
            <person name="Bucher P."/>
            <person name="Zilian O."/>
        </authorList>
    </citation>
    <scope>IDENTIFICATION AS A STEALTH PROTEIN</scope>
    <scope>PREDICTION OF FUNCTION</scope>
</reference>
<feature type="chain" id="PRO_0000235947" description="Exopolysaccharide phosphotransferase CpsY">
    <location>
        <begin position="1"/>
        <end position="532"/>
    </location>
</feature>